<proteinExistence type="evidence at protein level"/>
<comment type="function">
    <text evidence="1">Required for biogenesis of the 60S ribosomal subunit.</text>
</comment>
<comment type="interaction">
    <interactant intactId="EBI-266081">
        <id>Q9VZE6</id>
    </interactant>
    <interactant intactId="EBI-243148">
        <id>Q9V9Z9</id>
        <label>CG1542</label>
    </interactant>
    <organismsDiffer>false</organismsDiffer>
    <experiments>3</experiments>
</comment>
<comment type="subcellular location">
    <subcellularLocation>
        <location evidence="1">Nucleus</location>
        <location evidence="1">Nucleolus</location>
    </subcellularLocation>
</comment>
<comment type="similarity">
    <text evidence="4">Belongs to the BRX1 family.</text>
</comment>
<name>BRX1_DROME</name>
<organism>
    <name type="scientific">Drosophila melanogaster</name>
    <name type="common">Fruit fly</name>
    <dbReference type="NCBI Taxonomy" id="7227"/>
    <lineage>
        <taxon>Eukaryota</taxon>
        <taxon>Metazoa</taxon>
        <taxon>Ecdysozoa</taxon>
        <taxon>Arthropoda</taxon>
        <taxon>Hexapoda</taxon>
        <taxon>Insecta</taxon>
        <taxon>Pterygota</taxon>
        <taxon>Neoptera</taxon>
        <taxon>Endopterygota</taxon>
        <taxon>Diptera</taxon>
        <taxon>Brachycera</taxon>
        <taxon>Muscomorpha</taxon>
        <taxon>Ephydroidea</taxon>
        <taxon>Drosophilidae</taxon>
        <taxon>Drosophila</taxon>
        <taxon>Sophophora</taxon>
    </lineage>
</organism>
<gene>
    <name type="ORF">CG11583</name>
</gene>
<accession>Q9VZE6</accession>
<accession>Q8MSC3</accession>
<reference key="1">
    <citation type="journal article" date="2000" name="Science">
        <title>The genome sequence of Drosophila melanogaster.</title>
        <authorList>
            <person name="Adams M.D."/>
            <person name="Celniker S.E."/>
            <person name="Holt R.A."/>
            <person name="Evans C.A."/>
            <person name="Gocayne J.D."/>
            <person name="Amanatides P.G."/>
            <person name="Scherer S.E."/>
            <person name="Li P.W."/>
            <person name="Hoskins R.A."/>
            <person name="Galle R.F."/>
            <person name="George R.A."/>
            <person name="Lewis S.E."/>
            <person name="Richards S."/>
            <person name="Ashburner M."/>
            <person name="Henderson S.N."/>
            <person name="Sutton G.G."/>
            <person name="Wortman J.R."/>
            <person name="Yandell M.D."/>
            <person name="Zhang Q."/>
            <person name="Chen L.X."/>
            <person name="Brandon R.C."/>
            <person name="Rogers Y.-H.C."/>
            <person name="Blazej R.G."/>
            <person name="Champe M."/>
            <person name="Pfeiffer B.D."/>
            <person name="Wan K.H."/>
            <person name="Doyle C."/>
            <person name="Baxter E.G."/>
            <person name="Helt G."/>
            <person name="Nelson C.R."/>
            <person name="Miklos G.L.G."/>
            <person name="Abril J.F."/>
            <person name="Agbayani A."/>
            <person name="An H.-J."/>
            <person name="Andrews-Pfannkoch C."/>
            <person name="Baldwin D."/>
            <person name="Ballew R.M."/>
            <person name="Basu A."/>
            <person name="Baxendale J."/>
            <person name="Bayraktaroglu L."/>
            <person name="Beasley E.M."/>
            <person name="Beeson K.Y."/>
            <person name="Benos P.V."/>
            <person name="Berman B.P."/>
            <person name="Bhandari D."/>
            <person name="Bolshakov S."/>
            <person name="Borkova D."/>
            <person name="Botchan M.R."/>
            <person name="Bouck J."/>
            <person name="Brokstein P."/>
            <person name="Brottier P."/>
            <person name="Burtis K.C."/>
            <person name="Busam D.A."/>
            <person name="Butler H."/>
            <person name="Cadieu E."/>
            <person name="Center A."/>
            <person name="Chandra I."/>
            <person name="Cherry J.M."/>
            <person name="Cawley S."/>
            <person name="Dahlke C."/>
            <person name="Davenport L.B."/>
            <person name="Davies P."/>
            <person name="de Pablos B."/>
            <person name="Delcher A."/>
            <person name="Deng Z."/>
            <person name="Mays A.D."/>
            <person name="Dew I."/>
            <person name="Dietz S.M."/>
            <person name="Dodson K."/>
            <person name="Doup L.E."/>
            <person name="Downes M."/>
            <person name="Dugan-Rocha S."/>
            <person name="Dunkov B.C."/>
            <person name="Dunn P."/>
            <person name="Durbin K.J."/>
            <person name="Evangelista C.C."/>
            <person name="Ferraz C."/>
            <person name="Ferriera S."/>
            <person name="Fleischmann W."/>
            <person name="Fosler C."/>
            <person name="Gabrielian A.E."/>
            <person name="Garg N.S."/>
            <person name="Gelbart W.M."/>
            <person name="Glasser K."/>
            <person name="Glodek A."/>
            <person name="Gong F."/>
            <person name="Gorrell J.H."/>
            <person name="Gu Z."/>
            <person name="Guan P."/>
            <person name="Harris M."/>
            <person name="Harris N.L."/>
            <person name="Harvey D.A."/>
            <person name="Heiman T.J."/>
            <person name="Hernandez J.R."/>
            <person name="Houck J."/>
            <person name="Hostin D."/>
            <person name="Houston K.A."/>
            <person name="Howland T.J."/>
            <person name="Wei M.-H."/>
            <person name="Ibegwam C."/>
            <person name="Jalali M."/>
            <person name="Kalush F."/>
            <person name="Karpen G.H."/>
            <person name="Ke Z."/>
            <person name="Kennison J.A."/>
            <person name="Ketchum K.A."/>
            <person name="Kimmel B.E."/>
            <person name="Kodira C.D."/>
            <person name="Kraft C.L."/>
            <person name="Kravitz S."/>
            <person name="Kulp D."/>
            <person name="Lai Z."/>
            <person name="Lasko P."/>
            <person name="Lei Y."/>
            <person name="Levitsky A.A."/>
            <person name="Li J.H."/>
            <person name="Li Z."/>
            <person name="Liang Y."/>
            <person name="Lin X."/>
            <person name="Liu X."/>
            <person name="Mattei B."/>
            <person name="McIntosh T.C."/>
            <person name="McLeod M.P."/>
            <person name="McPherson D."/>
            <person name="Merkulov G."/>
            <person name="Milshina N.V."/>
            <person name="Mobarry C."/>
            <person name="Morris J."/>
            <person name="Moshrefi A."/>
            <person name="Mount S.M."/>
            <person name="Moy M."/>
            <person name="Murphy B."/>
            <person name="Murphy L."/>
            <person name="Muzny D.M."/>
            <person name="Nelson D.L."/>
            <person name="Nelson D.R."/>
            <person name="Nelson K.A."/>
            <person name="Nixon K."/>
            <person name="Nusskern D.R."/>
            <person name="Pacleb J.M."/>
            <person name="Palazzolo M."/>
            <person name="Pittman G.S."/>
            <person name="Pan S."/>
            <person name="Pollard J."/>
            <person name="Puri V."/>
            <person name="Reese M.G."/>
            <person name="Reinert K."/>
            <person name="Remington K."/>
            <person name="Saunders R.D.C."/>
            <person name="Scheeler F."/>
            <person name="Shen H."/>
            <person name="Shue B.C."/>
            <person name="Siden-Kiamos I."/>
            <person name="Simpson M."/>
            <person name="Skupski M.P."/>
            <person name="Smith T.J."/>
            <person name="Spier E."/>
            <person name="Spradling A.C."/>
            <person name="Stapleton M."/>
            <person name="Strong R."/>
            <person name="Sun E."/>
            <person name="Svirskas R."/>
            <person name="Tector C."/>
            <person name="Turner R."/>
            <person name="Venter E."/>
            <person name="Wang A.H."/>
            <person name="Wang X."/>
            <person name="Wang Z.-Y."/>
            <person name="Wassarman D.A."/>
            <person name="Weinstock G.M."/>
            <person name="Weissenbach J."/>
            <person name="Williams S.M."/>
            <person name="Woodage T."/>
            <person name="Worley K.C."/>
            <person name="Wu D."/>
            <person name="Yang S."/>
            <person name="Yao Q.A."/>
            <person name="Ye J."/>
            <person name="Yeh R.-F."/>
            <person name="Zaveri J.S."/>
            <person name="Zhan M."/>
            <person name="Zhang G."/>
            <person name="Zhao Q."/>
            <person name="Zheng L."/>
            <person name="Zheng X.H."/>
            <person name="Zhong F.N."/>
            <person name="Zhong W."/>
            <person name="Zhou X."/>
            <person name="Zhu S.C."/>
            <person name="Zhu X."/>
            <person name="Smith H.O."/>
            <person name="Gibbs R.A."/>
            <person name="Myers E.W."/>
            <person name="Rubin G.M."/>
            <person name="Venter J.C."/>
        </authorList>
    </citation>
    <scope>NUCLEOTIDE SEQUENCE [LARGE SCALE GENOMIC DNA]</scope>
    <source>
        <strain>Berkeley</strain>
    </source>
</reference>
<reference key="2">
    <citation type="journal article" date="2002" name="Genome Biol.">
        <title>Annotation of the Drosophila melanogaster euchromatic genome: a systematic review.</title>
        <authorList>
            <person name="Misra S."/>
            <person name="Crosby M.A."/>
            <person name="Mungall C.J."/>
            <person name="Matthews B.B."/>
            <person name="Campbell K.S."/>
            <person name="Hradecky P."/>
            <person name="Huang Y."/>
            <person name="Kaminker J.S."/>
            <person name="Millburn G.H."/>
            <person name="Prochnik S.E."/>
            <person name="Smith C.D."/>
            <person name="Tupy J.L."/>
            <person name="Whitfield E.J."/>
            <person name="Bayraktaroglu L."/>
            <person name="Berman B.P."/>
            <person name="Bettencourt B.R."/>
            <person name="Celniker S.E."/>
            <person name="de Grey A.D.N.J."/>
            <person name="Drysdale R.A."/>
            <person name="Harris N.L."/>
            <person name="Richter J."/>
            <person name="Russo S."/>
            <person name="Schroeder A.J."/>
            <person name="Shu S.Q."/>
            <person name="Stapleton M."/>
            <person name="Yamada C."/>
            <person name="Ashburner M."/>
            <person name="Gelbart W.M."/>
            <person name="Rubin G.M."/>
            <person name="Lewis S.E."/>
        </authorList>
    </citation>
    <scope>GENOME REANNOTATION</scope>
    <source>
        <strain>Berkeley</strain>
    </source>
</reference>
<reference key="3">
    <citation type="journal article" date="2002" name="Genome Biol.">
        <title>A Drosophila full-length cDNA resource.</title>
        <authorList>
            <person name="Stapleton M."/>
            <person name="Carlson J.W."/>
            <person name="Brokstein P."/>
            <person name="Yu C."/>
            <person name="Champe M."/>
            <person name="George R.A."/>
            <person name="Guarin H."/>
            <person name="Kronmiller B."/>
            <person name="Pacleb J.M."/>
            <person name="Park S."/>
            <person name="Wan K.H."/>
            <person name="Rubin G.M."/>
            <person name="Celniker S.E."/>
        </authorList>
    </citation>
    <scope>NUCLEOTIDE SEQUENCE [LARGE SCALE MRNA]</scope>
    <source>
        <strain>Berkeley</strain>
        <tissue>Embryo</tissue>
    </source>
</reference>
<keyword id="KW-0539">Nucleus</keyword>
<keyword id="KW-1185">Reference proteome</keyword>
<keyword id="KW-0690">Ribosome biogenesis</keyword>
<feature type="chain" id="PRO_0000120233" description="Ribosome biogenesis protein BRX1 homolog">
    <location>
        <begin position="1"/>
        <end position="359"/>
    </location>
</feature>
<feature type="domain" description="Brix" evidence="2">
    <location>
        <begin position="50"/>
        <end position="241"/>
    </location>
</feature>
<feature type="region of interest" description="Disordered" evidence="3">
    <location>
        <begin position="1"/>
        <end position="42"/>
    </location>
</feature>
<feature type="compositionally biased region" description="Basic residues" evidence="3">
    <location>
        <begin position="1"/>
        <end position="12"/>
    </location>
</feature>
<sequence length="359" mass="41618">MGRKFQNKKKKAAPQLEIVPLDENPPLPPQRSSDDVVPKKARKEKWVNKQRVLVFSARGISHRDRHLMKDIKTLMPHHRPESKMERSKTLSVVNEMCEMKHCNKAMLFEGRRKRDLYMWISNTSGSTGPSAKFLIENIHTMAELKMTGNCLRGSRPLLSFDSKFDELPHLKLLKELFVQTYSVPNHHPKSQPFVDHVFTFTYLDKRIWFRNFQILSEDGGLSEVGPRYVMNPVKIFDGSFTGKTIWENPDYVSPSKQRQVLKKAAKDKYVNRVEQKVKHEATRPIRAYDGMDNDELFEDDDPVETAKILAAIAKKKKEEAAKQTPKSALTKKIKEKQLQAVKDVIERKKARTIKRVKKV</sequence>
<dbReference type="EMBL" id="AE014296">
    <property type="protein sequence ID" value="AAF47877.3"/>
    <property type="molecule type" value="Genomic_DNA"/>
</dbReference>
<dbReference type="EMBL" id="AY118916">
    <property type="protein sequence ID" value="AAM50776.1"/>
    <property type="molecule type" value="mRNA"/>
</dbReference>
<dbReference type="RefSeq" id="NP_001033989.1">
    <property type="nucleotide sequence ID" value="NM_001038900.2"/>
</dbReference>
<dbReference type="SMR" id="Q9VZE6"/>
<dbReference type="BioGRID" id="77459">
    <property type="interactions" value="10"/>
</dbReference>
<dbReference type="FunCoup" id="Q9VZE6">
    <property type="interactions" value="1739"/>
</dbReference>
<dbReference type="IntAct" id="Q9VZE6">
    <property type="interactions" value="55"/>
</dbReference>
<dbReference type="STRING" id="7227.FBpp0073098"/>
<dbReference type="PaxDb" id="7227-FBpp0073098"/>
<dbReference type="DNASU" id="326206"/>
<dbReference type="EnsemblMetazoa" id="FBtr0073242">
    <property type="protein sequence ID" value="FBpp0073098"/>
    <property type="gene ID" value="FBgn0035524"/>
</dbReference>
<dbReference type="GeneID" id="326206"/>
<dbReference type="KEGG" id="dme:Dmel_CG11583"/>
<dbReference type="UCSC" id="CG11583-RA">
    <property type="organism name" value="d. melanogaster"/>
</dbReference>
<dbReference type="AGR" id="FB:FBgn0035524"/>
<dbReference type="FlyBase" id="FBgn0035524">
    <property type="gene designation" value="CG11583"/>
</dbReference>
<dbReference type="VEuPathDB" id="VectorBase:FBgn0035524"/>
<dbReference type="eggNOG" id="KOG2971">
    <property type="taxonomic scope" value="Eukaryota"/>
</dbReference>
<dbReference type="GeneTree" id="ENSGT00390000014467"/>
<dbReference type="HOGENOM" id="CLU_048373_0_0_1"/>
<dbReference type="InParanoid" id="Q9VZE6"/>
<dbReference type="OrthoDB" id="1638493at2759"/>
<dbReference type="PhylomeDB" id="Q9VZE6"/>
<dbReference type="BioGRID-ORCS" id="326206">
    <property type="hits" value="0 hits in 1 CRISPR screen"/>
</dbReference>
<dbReference type="GenomeRNAi" id="326206"/>
<dbReference type="PRO" id="PR:Q9VZE6"/>
<dbReference type="Proteomes" id="UP000000803">
    <property type="component" value="Chromosome 3L"/>
</dbReference>
<dbReference type="Bgee" id="FBgn0035524">
    <property type="expression patterns" value="Expressed in egg cell and 95 other cell types or tissues"/>
</dbReference>
<dbReference type="GO" id="GO:0005730">
    <property type="term" value="C:nucleolus"/>
    <property type="evidence" value="ECO:0000250"/>
    <property type="project" value="FlyBase"/>
</dbReference>
<dbReference type="GO" id="GO:0003723">
    <property type="term" value="F:RNA binding"/>
    <property type="evidence" value="ECO:0000318"/>
    <property type="project" value="GO_Central"/>
</dbReference>
<dbReference type="GO" id="GO:0019843">
    <property type="term" value="F:rRNA binding"/>
    <property type="evidence" value="ECO:0000250"/>
    <property type="project" value="FlyBase"/>
</dbReference>
<dbReference type="GO" id="GO:0000027">
    <property type="term" value="P:ribosomal large subunit assembly"/>
    <property type="evidence" value="ECO:0000318"/>
    <property type="project" value="GO_Central"/>
</dbReference>
<dbReference type="GO" id="GO:0006364">
    <property type="term" value="P:rRNA processing"/>
    <property type="evidence" value="ECO:0007669"/>
    <property type="project" value="InterPro"/>
</dbReference>
<dbReference type="FunFam" id="3.40.50.10480:FF:000003">
    <property type="entry name" value="Ribosome biogenesis protein BRX1"/>
    <property type="match status" value="1"/>
</dbReference>
<dbReference type="InterPro" id="IPR007109">
    <property type="entry name" value="Brix"/>
</dbReference>
<dbReference type="InterPro" id="IPR026532">
    <property type="entry name" value="BRX1"/>
</dbReference>
<dbReference type="PANTHER" id="PTHR13634">
    <property type="entry name" value="RIBOSOME BIOGENESIS PROTEIN BRIX"/>
    <property type="match status" value="1"/>
</dbReference>
<dbReference type="PANTHER" id="PTHR13634:SF0">
    <property type="entry name" value="RIBOSOME BIOGENESIS PROTEIN BRX1 HOMOLOG"/>
    <property type="match status" value="1"/>
</dbReference>
<dbReference type="Pfam" id="PF04427">
    <property type="entry name" value="Brix"/>
    <property type="match status" value="1"/>
</dbReference>
<dbReference type="SMART" id="SM00879">
    <property type="entry name" value="Brix"/>
    <property type="match status" value="1"/>
</dbReference>
<dbReference type="SUPFAM" id="SSF52954">
    <property type="entry name" value="Class II aaRS ABD-related"/>
    <property type="match status" value="1"/>
</dbReference>
<dbReference type="PROSITE" id="PS50833">
    <property type="entry name" value="BRIX"/>
    <property type="match status" value="1"/>
</dbReference>
<protein>
    <recommendedName>
        <fullName>Ribosome biogenesis protein BRX1 homolog</fullName>
    </recommendedName>
    <alternativeName>
        <fullName>Brix domain-containing protein 2 homolog</fullName>
    </alternativeName>
</protein>
<evidence type="ECO:0000250" key="1"/>
<evidence type="ECO:0000255" key="2">
    <source>
        <dbReference type="PROSITE-ProRule" id="PRU00034"/>
    </source>
</evidence>
<evidence type="ECO:0000256" key="3">
    <source>
        <dbReference type="SAM" id="MobiDB-lite"/>
    </source>
</evidence>
<evidence type="ECO:0000305" key="4"/>